<accession>Q8YSA7</accession>
<keyword id="KW-0963">Cytoplasm</keyword>
<keyword id="KW-0489">Methyltransferase</keyword>
<keyword id="KW-1185">Reference proteome</keyword>
<keyword id="KW-0698">rRNA processing</keyword>
<keyword id="KW-0949">S-adenosyl-L-methionine</keyword>
<keyword id="KW-0808">Transferase</keyword>
<gene>
    <name evidence="1" type="primary">rsmG</name>
    <name type="ordered locus">alr3182</name>
</gene>
<proteinExistence type="inferred from homology"/>
<sequence>MTNLLPEMAEIWQQTLNWQPTDSQQARFQQLYELILEGNRQLNLTRITEPQEFWEKHLWDSLRGVAPQQQLISSLQLGASVIDIGTGAGFPGVPVAIIASNSTITLVDSTRKKITFIDTILSELALTNAKTLVSRAEEIGQQPQHREQYDVALIRAVGTASPCAEYTLPLLKLGGLAVIYRGTWTEEETTSVENAAQQLGGTVELIDNFTTPLTNSVRHCLYLRKVAKTPANFPRAVGVPSQKPI</sequence>
<protein>
    <recommendedName>
        <fullName evidence="1">Ribosomal RNA small subunit methyltransferase G</fullName>
        <ecNumber evidence="1">2.1.1.-</ecNumber>
    </recommendedName>
    <alternativeName>
        <fullName evidence="1">16S rRNA 7-methylguanosine methyltransferase</fullName>
        <shortName evidence="1">16S rRNA m7G methyltransferase</shortName>
    </alternativeName>
</protein>
<feature type="chain" id="PRO_0000184206" description="Ribosomal RNA small subunit methyltransferase G">
    <location>
        <begin position="1"/>
        <end position="245"/>
    </location>
</feature>
<feature type="binding site" evidence="1">
    <location>
        <position position="85"/>
    </location>
    <ligand>
        <name>S-adenosyl-L-methionine</name>
        <dbReference type="ChEBI" id="CHEBI:59789"/>
    </ligand>
</feature>
<feature type="binding site" evidence="1">
    <location>
        <position position="90"/>
    </location>
    <ligand>
        <name>S-adenosyl-L-methionine</name>
        <dbReference type="ChEBI" id="CHEBI:59789"/>
    </ligand>
</feature>
<feature type="binding site" evidence="1">
    <location>
        <begin position="108"/>
        <end position="110"/>
    </location>
    <ligand>
        <name>S-adenosyl-L-methionine</name>
        <dbReference type="ChEBI" id="CHEBI:59789"/>
    </ligand>
</feature>
<feature type="binding site" evidence="1">
    <location>
        <begin position="136"/>
        <end position="137"/>
    </location>
    <ligand>
        <name>S-adenosyl-L-methionine</name>
        <dbReference type="ChEBI" id="CHEBI:59789"/>
    </ligand>
</feature>
<feature type="binding site" evidence="1">
    <location>
        <position position="155"/>
    </location>
    <ligand>
        <name>S-adenosyl-L-methionine</name>
        <dbReference type="ChEBI" id="CHEBI:59789"/>
    </ligand>
</feature>
<reference key="1">
    <citation type="journal article" date="2001" name="DNA Res.">
        <title>Complete genomic sequence of the filamentous nitrogen-fixing cyanobacterium Anabaena sp. strain PCC 7120.</title>
        <authorList>
            <person name="Kaneko T."/>
            <person name="Nakamura Y."/>
            <person name="Wolk C.P."/>
            <person name="Kuritz T."/>
            <person name="Sasamoto S."/>
            <person name="Watanabe A."/>
            <person name="Iriguchi M."/>
            <person name="Ishikawa A."/>
            <person name="Kawashima K."/>
            <person name="Kimura T."/>
            <person name="Kishida Y."/>
            <person name="Kohara M."/>
            <person name="Matsumoto M."/>
            <person name="Matsuno A."/>
            <person name="Muraki A."/>
            <person name="Nakazaki N."/>
            <person name="Shimpo S."/>
            <person name="Sugimoto M."/>
            <person name="Takazawa M."/>
            <person name="Yamada M."/>
            <person name="Yasuda M."/>
            <person name="Tabata S."/>
        </authorList>
    </citation>
    <scope>NUCLEOTIDE SEQUENCE [LARGE SCALE GENOMIC DNA]</scope>
    <source>
        <strain>PCC 7120 / SAG 25.82 / UTEX 2576</strain>
    </source>
</reference>
<comment type="function">
    <text evidence="1">Specifically methylates the N7 position of a guanine in 16S rRNA.</text>
</comment>
<comment type="subcellular location">
    <subcellularLocation>
        <location evidence="1">Cytoplasm</location>
    </subcellularLocation>
</comment>
<comment type="similarity">
    <text evidence="1">Belongs to the methyltransferase superfamily. RNA methyltransferase RsmG family.</text>
</comment>
<evidence type="ECO:0000255" key="1">
    <source>
        <dbReference type="HAMAP-Rule" id="MF_00074"/>
    </source>
</evidence>
<dbReference type="EC" id="2.1.1.-" evidence="1"/>
<dbReference type="EMBL" id="BA000019">
    <property type="protein sequence ID" value="BAB74881.1"/>
    <property type="molecule type" value="Genomic_DNA"/>
</dbReference>
<dbReference type="PIR" id="AG2203">
    <property type="entry name" value="AG2203"/>
</dbReference>
<dbReference type="RefSeq" id="WP_010997333.1">
    <property type="nucleotide sequence ID" value="NZ_RSCN01000001.1"/>
</dbReference>
<dbReference type="SMR" id="Q8YSA7"/>
<dbReference type="STRING" id="103690.gene:10495219"/>
<dbReference type="KEGG" id="ana:alr3182"/>
<dbReference type="eggNOG" id="COG0357">
    <property type="taxonomic scope" value="Bacteria"/>
</dbReference>
<dbReference type="OrthoDB" id="9808773at2"/>
<dbReference type="Proteomes" id="UP000002483">
    <property type="component" value="Chromosome"/>
</dbReference>
<dbReference type="GO" id="GO:0005829">
    <property type="term" value="C:cytosol"/>
    <property type="evidence" value="ECO:0007669"/>
    <property type="project" value="TreeGrafter"/>
</dbReference>
<dbReference type="GO" id="GO:0070043">
    <property type="term" value="F:rRNA (guanine-N7-)-methyltransferase activity"/>
    <property type="evidence" value="ECO:0007669"/>
    <property type="project" value="UniProtKB-UniRule"/>
</dbReference>
<dbReference type="FunFam" id="3.40.50.150:FF:000041">
    <property type="entry name" value="Ribosomal RNA small subunit methyltransferase G"/>
    <property type="match status" value="1"/>
</dbReference>
<dbReference type="Gene3D" id="3.40.50.150">
    <property type="entry name" value="Vaccinia Virus protein VP39"/>
    <property type="match status" value="1"/>
</dbReference>
<dbReference type="HAMAP" id="MF_00074">
    <property type="entry name" value="16SrRNA_methyltr_G"/>
    <property type="match status" value="1"/>
</dbReference>
<dbReference type="InterPro" id="IPR003682">
    <property type="entry name" value="rRNA_ssu_MeTfrase_G"/>
</dbReference>
<dbReference type="InterPro" id="IPR029063">
    <property type="entry name" value="SAM-dependent_MTases_sf"/>
</dbReference>
<dbReference type="NCBIfam" id="TIGR00138">
    <property type="entry name" value="rsmG_gidB"/>
    <property type="match status" value="1"/>
</dbReference>
<dbReference type="PANTHER" id="PTHR31760">
    <property type="entry name" value="S-ADENOSYL-L-METHIONINE-DEPENDENT METHYLTRANSFERASES SUPERFAMILY PROTEIN"/>
    <property type="match status" value="1"/>
</dbReference>
<dbReference type="PANTHER" id="PTHR31760:SF0">
    <property type="entry name" value="S-ADENOSYL-L-METHIONINE-DEPENDENT METHYLTRANSFERASES SUPERFAMILY PROTEIN"/>
    <property type="match status" value="1"/>
</dbReference>
<dbReference type="Pfam" id="PF02527">
    <property type="entry name" value="GidB"/>
    <property type="match status" value="1"/>
</dbReference>
<dbReference type="PIRSF" id="PIRSF003078">
    <property type="entry name" value="GidB"/>
    <property type="match status" value="1"/>
</dbReference>
<dbReference type="SUPFAM" id="SSF53335">
    <property type="entry name" value="S-adenosyl-L-methionine-dependent methyltransferases"/>
    <property type="match status" value="1"/>
</dbReference>
<organism>
    <name type="scientific">Nostoc sp. (strain PCC 7120 / SAG 25.82 / UTEX 2576)</name>
    <dbReference type="NCBI Taxonomy" id="103690"/>
    <lineage>
        <taxon>Bacteria</taxon>
        <taxon>Bacillati</taxon>
        <taxon>Cyanobacteriota</taxon>
        <taxon>Cyanophyceae</taxon>
        <taxon>Nostocales</taxon>
        <taxon>Nostocaceae</taxon>
        <taxon>Nostoc</taxon>
    </lineage>
</organism>
<name>RSMG_NOSS1</name>